<feature type="chain" id="PRO_0000257651" description="Dual-action ribosomal maturation protein DarP">
    <location>
        <begin position="1"/>
        <end position="182"/>
    </location>
</feature>
<gene>
    <name evidence="1" type="primary">darP</name>
    <name type="ordered locus">YPN_3481</name>
    <name type="ORF">YP516_3954</name>
</gene>
<protein>
    <recommendedName>
        <fullName evidence="1">Dual-action ribosomal maturation protein DarP</fullName>
    </recommendedName>
    <alternativeName>
        <fullName evidence="1">Large ribosomal subunit assembly factor DarP</fullName>
    </alternativeName>
</protein>
<sequence>MNKQPEDWLDDVPENKNDDDDEIIWVSKSEIKRDAEALKDLGTELVDLGKNALERIPLDEDLLAAIELAQKIKKEGRRRQLQLIGKMLRARDVEPIQTALDKLKNRHNQQISLFHKLETLRDRLIAEGDEAIPTVLELYPDADRQQLRSLVRNAQKEQAANKPPKSFRQIFSYLRELAEKKQ</sequence>
<comment type="function">
    <text evidence="1">Member of a network of 50S ribosomal subunit biogenesis factors which assembles along the 30S-50S interface, preventing incorrect 23S rRNA structures from forming. Promotes peptidyl transferase center (PTC) maturation.</text>
</comment>
<comment type="subcellular location">
    <subcellularLocation>
        <location evidence="1">Cytoplasm</location>
    </subcellularLocation>
    <text evidence="1">Associates with late stage pre-50S ribosomal subunits.</text>
</comment>
<comment type="similarity">
    <text evidence="1">Belongs to the DarP family.</text>
</comment>
<name>DARP_YERPN</name>
<reference key="1">
    <citation type="journal article" date="2006" name="J. Bacteriol.">
        <title>Complete genome sequence of Yersinia pestis strains Antiqua and Nepal516: evidence of gene reduction in an emerging pathogen.</title>
        <authorList>
            <person name="Chain P.S.G."/>
            <person name="Hu P."/>
            <person name="Malfatti S.A."/>
            <person name="Radnedge L."/>
            <person name="Larimer F."/>
            <person name="Vergez L.M."/>
            <person name="Worsham P."/>
            <person name="Chu M.C."/>
            <person name="Andersen G.L."/>
        </authorList>
    </citation>
    <scope>NUCLEOTIDE SEQUENCE [LARGE SCALE GENOMIC DNA]</scope>
    <source>
        <strain>Nepal516</strain>
    </source>
</reference>
<reference key="2">
    <citation type="submission" date="2009-04" db="EMBL/GenBank/DDBJ databases">
        <title>Yersinia pestis Nepal516A whole genome shotgun sequencing project.</title>
        <authorList>
            <person name="Plunkett G. III"/>
            <person name="Anderson B.D."/>
            <person name="Baumler D.J."/>
            <person name="Burland V."/>
            <person name="Cabot E.L."/>
            <person name="Glasner J.D."/>
            <person name="Mau B."/>
            <person name="Neeno-Eckwall E."/>
            <person name="Perna N.T."/>
            <person name="Munk A.C."/>
            <person name="Tapia R."/>
            <person name="Green L.D."/>
            <person name="Rogers Y.C."/>
            <person name="Detter J.C."/>
            <person name="Bruce D.C."/>
            <person name="Brettin T.S."/>
        </authorList>
    </citation>
    <scope>NUCLEOTIDE SEQUENCE [LARGE SCALE GENOMIC DNA]</scope>
    <source>
        <strain>Nepal516</strain>
    </source>
</reference>
<evidence type="ECO:0000255" key="1">
    <source>
        <dbReference type="HAMAP-Rule" id="MF_00765"/>
    </source>
</evidence>
<accession>Q1CDX2</accession>
<accession>D1Q1F5</accession>
<proteinExistence type="inferred from homology"/>
<organism>
    <name type="scientific">Yersinia pestis bv. Antiqua (strain Nepal516)</name>
    <dbReference type="NCBI Taxonomy" id="377628"/>
    <lineage>
        <taxon>Bacteria</taxon>
        <taxon>Pseudomonadati</taxon>
        <taxon>Pseudomonadota</taxon>
        <taxon>Gammaproteobacteria</taxon>
        <taxon>Enterobacterales</taxon>
        <taxon>Yersiniaceae</taxon>
        <taxon>Yersinia</taxon>
    </lineage>
</organism>
<keyword id="KW-0963">Cytoplasm</keyword>
<keyword id="KW-0690">Ribosome biogenesis</keyword>
<keyword id="KW-0694">RNA-binding</keyword>
<keyword id="KW-0699">rRNA-binding</keyword>
<dbReference type="EMBL" id="CP000305">
    <property type="protein sequence ID" value="ABG19808.1"/>
    <property type="molecule type" value="Genomic_DNA"/>
</dbReference>
<dbReference type="EMBL" id="ACNQ01000019">
    <property type="protein sequence ID" value="EEO74358.1"/>
    <property type="molecule type" value="Genomic_DNA"/>
</dbReference>
<dbReference type="SMR" id="Q1CDX2"/>
<dbReference type="KEGG" id="ypn:YPN_3481"/>
<dbReference type="HOGENOM" id="CLU_106757_2_0_6"/>
<dbReference type="Proteomes" id="UP000008936">
    <property type="component" value="Chromosome"/>
</dbReference>
<dbReference type="GO" id="GO:0005829">
    <property type="term" value="C:cytosol"/>
    <property type="evidence" value="ECO:0007669"/>
    <property type="project" value="TreeGrafter"/>
</dbReference>
<dbReference type="GO" id="GO:0043022">
    <property type="term" value="F:ribosome binding"/>
    <property type="evidence" value="ECO:0007669"/>
    <property type="project" value="UniProtKB-UniRule"/>
</dbReference>
<dbReference type="GO" id="GO:0019843">
    <property type="term" value="F:rRNA binding"/>
    <property type="evidence" value="ECO:0007669"/>
    <property type="project" value="UniProtKB-UniRule"/>
</dbReference>
<dbReference type="GO" id="GO:1902626">
    <property type="term" value="P:assembly of large subunit precursor of preribosome"/>
    <property type="evidence" value="ECO:0007669"/>
    <property type="project" value="UniProtKB-UniRule"/>
</dbReference>
<dbReference type="CDD" id="cd16331">
    <property type="entry name" value="YjgA-like"/>
    <property type="match status" value="1"/>
</dbReference>
<dbReference type="FunFam" id="1.10.60.30:FF:000001">
    <property type="entry name" value="UPF0307 protein YjgA"/>
    <property type="match status" value="1"/>
</dbReference>
<dbReference type="FunFam" id="1.10.60.30:FF:000002">
    <property type="entry name" value="UPF0307 protein YjgA"/>
    <property type="match status" value="1"/>
</dbReference>
<dbReference type="Gene3D" id="1.10.60.30">
    <property type="entry name" value="PSPTO4464-like domains"/>
    <property type="match status" value="2"/>
</dbReference>
<dbReference type="HAMAP" id="MF_00765">
    <property type="entry name" value="DarP"/>
    <property type="match status" value="1"/>
</dbReference>
<dbReference type="InterPro" id="IPR006839">
    <property type="entry name" value="DarP"/>
</dbReference>
<dbReference type="InterPro" id="IPR023153">
    <property type="entry name" value="DarP_sf"/>
</dbReference>
<dbReference type="NCBIfam" id="NF003593">
    <property type="entry name" value="PRK05255.1-1"/>
    <property type="match status" value="1"/>
</dbReference>
<dbReference type="PANTHER" id="PTHR38101">
    <property type="entry name" value="UPF0307 PROTEIN YJGA"/>
    <property type="match status" value="1"/>
</dbReference>
<dbReference type="PANTHER" id="PTHR38101:SF1">
    <property type="entry name" value="UPF0307 PROTEIN YJGA"/>
    <property type="match status" value="1"/>
</dbReference>
<dbReference type="Pfam" id="PF04751">
    <property type="entry name" value="DarP"/>
    <property type="match status" value="1"/>
</dbReference>
<dbReference type="PIRSF" id="PIRSF016183">
    <property type="entry name" value="UCP016183"/>
    <property type="match status" value="1"/>
</dbReference>
<dbReference type="SUPFAM" id="SSF158710">
    <property type="entry name" value="PSPTO4464-like"/>
    <property type="match status" value="1"/>
</dbReference>